<evidence type="ECO:0000250" key="1">
    <source>
        <dbReference type="UniProtKB" id="P46959"/>
    </source>
</evidence>
<evidence type="ECO:0000250" key="2">
    <source>
        <dbReference type="UniProtKB" id="Q96FX7"/>
    </source>
</evidence>
<evidence type="ECO:0000255" key="3">
    <source>
        <dbReference type="PROSITE-ProRule" id="PRU00952"/>
    </source>
</evidence>
<evidence type="ECO:0000305" key="4"/>
<accession>Q80XC2</accession>
<accession>Q8BMD4</accession>
<accession>Q8BX33</accession>
<protein>
    <recommendedName>
        <fullName>tRNA (adenine(58)-N(1))-methyltransferase catalytic subunit TRMT61A</fullName>
        <ecNumber evidence="2">2.1.1.220</ecNumber>
    </recommendedName>
    <alternativeName>
        <fullName>mRNA methyladenosine-N(1)-methyltransferase catalytic subunit TRMT61A</fullName>
        <ecNumber evidence="2">2.1.1.-</ecNumber>
    </alternativeName>
    <alternativeName>
        <fullName>tRNA(m1A58)-methyltransferase subunit TRMT61A</fullName>
        <shortName>tRNA(m1A58)MTase subunit TRMT61A</shortName>
    </alternativeName>
</protein>
<keyword id="KW-0007">Acetylation</keyword>
<keyword id="KW-0489">Methyltransferase</keyword>
<keyword id="KW-0539">Nucleus</keyword>
<keyword id="KW-0597">Phosphoprotein</keyword>
<keyword id="KW-1185">Reference proteome</keyword>
<keyword id="KW-0949">S-adenosyl-L-methionine</keyword>
<keyword id="KW-0808">Transferase</keyword>
<keyword id="KW-0819">tRNA processing</keyword>
<dbReference type="EC" id="2.1.1.220" evidence="2"/>
<dbReference type="EC" id="2.1.1.-" evidence="2"/>
<dbReference type="EMBL" id="AK049138">
    <property type="protein sequence ID" value="BAC33565.1"/>
    <property type="molecule type" value="mRNA"/>
</dbReference>
<dbReference type="EMBL" id="AK032824">
    <property type="protein sequence ID" value="BAC28042.1"/>
    <property type="molecule type" value="mRNA"/>
</dbReference>
<dbReference type="EMBL" id="BC051186">
    <property type="protein sequence ID" value="AAH51186.1"/>
    <property type="molecule type" value="mRNA"/>
</dbReference>
<dbReference type="CCDS" id="CCDS26184.1"/>
<dbReference type="RefSeq" id="NP_001093262.1">
    <property type="nucleotide sequence ID" value="NM_001099792.1"/>
</dbReference>
<dbReference type="RefSeq" id="NP_001093263.1">
    <property type="nucleotide sequence ID" value="NM_001099793.1"/>
</dbReference>
<dbReference type="RefSeq" id="NP_796348.2">
    <property type="nucleotide sequence ID" value="NM_177374.4"/>
</dbReference>
<dbReference type="SMR" id="Q80XC2"/>
<dbReference type="BioGRID" id="236550">
    <property type="interactions" value="11"/>
</dbReference>
<dbReference type="FunCoup" id="Q80XC2">
    <property type="interactions" value="1178"/>
</dbReference>
<dbReference type="IntAct" id="Q80XC2">
    <property type="interactions" value="1"/>
</dbReference>
<dbReference type="MINT" id="Q80XC2"/>
<dbReference type="STRING" id="10090.ENSMUSP00000082011"/>
<dbReference type="iPTMnet" id="Q80XC2"/>
<dbReference type="PhosphoSitePlus" id="Q80XC2"/>
<dbReference type="PaxDb" id="10090-ENSMUSP00000082011"/>
<dbReference type="PeptideAtlas" id="Q80XC2"/>
<dbReference type="ProteomicsDB" id="258850"/>
<dbReference type="Pumba" id="Q80XC2"/>
<dbReference type="Antibodypedia" id="6565">
    <property type="antibodies" value="77 antibodies from 22 providers"/>
</dbReference>
<dbReference type="DNASU" id="328162"/>
<dbReference type="Ensembl" id="ENSMUST00000084947.10">
    <property type="protein sequence ID" value="ENSMUSP00000082011.4"/>
    <property type="gene ID" value="ENSMUSG00000060950.13"/>
</dbReference>
<dbReference type="Ensembl" id="ENSMUST00000168338.2">
    <property type="protein sequence ID" value="ENSMUSP00000133128.2"/>
    <property type="gene ID" value="ENSMUSG00000060950.13"/>
</dbReference>
<dbReference type="GeneID" id="328162"/>
<dbReference type="KEGG" id="mmu:328162"/>
<dbReference type="UCSC" id="uc007pdo.1">
    <property type="organism name" value="mouse"/>
</dbReference>
<dbReference type="AGR" id="MGI:2443487"/>
<dbReference type="CTD" id="115708"/>
<dbReference type="MGI" id="MGI:2443487">
    <property type="gene designation" value="Trmt61a"/>
</dbReference>
<dbReference type="VEuPathDB" id="HostDB:ENSMUSG00000060950"/>
<dbReference type="eggNOG" id="KOG2915">
    <property type="taxonomic scope" value="Eukaryota"/>
</dbReference>
<dbReference type="GeneTree" id="ENSGT00940000154239"/>
<dbReference type="HOGENOM" id="CLU_025402_4_1_1"/>
<dbReference type="InParanoid" id="Q80XC2"/>
<dbReference type="OMA" id="RPDHRMI"/>
<dbReference type="OrthoDB" id="1925287at2759"/>
<dbReference type="PhylomeDB" id="Q80XC2"/>
<dbReference type="TreeFam" id="TF315053"/>
<dbReference type="BioGRID-ORCS" id="328162">
    <property type="hits" value="24 hits in 79 CRISPR screens"/>
</dbReference>
<dbReference type="ChiTaRS" id="Trmt61a">
    <property type="organism name" value="mouse"/>
</dbReference>
<dbReference type="PRO" id="PR:Q80XC2"/>
<dbReference type="Proteomes" id="UP000000589">
    <property type="component" value="Chromosome 12"/>
</dbReference>
<dbReference type="RNAct" id="Q80XC2">
    <property type="molecule type" value="protein"/>
</dbReference>
<dbReference type="Bgee" id="ENSMUSG00000060950">
    <property type="expression patterns" value="Expressed in dorsal pancreas and 210 other cell types or tissues"/>
</dbReference>
<dbReference type="ExpressionAtlas" id="Q80XC2">
    <property type="expression patterns" value="baseline and differential"/>
</dbReference>
<dbReference type="GO" id="GO:0005634">
    <property type="term" value="C:nucleus"/>
    <property type="evidence" value="ECO:0007669"/>
    <property type="project" value="UniProtKB-SubCell"/>
</dbReference>
<dbReference type="GO" id="GO:0031515">
    <property type="term" value="C:tRNA (m1A) methyltransferase complex"/>
    <property type="evidence" value="ECO:0007669"/>
    <property type="project" value="Ensembl"/>
</dbReference>
<dbReference type="GO" id="GO:0061953">
    <property type="term" value="F:mRNA (adenine-N1-)-methyltransferase activity"/>
    <property type="evidence" value="ECO:0000250"/>
    <property type="project" value="UniProtKB"/>
</dbReference>
<dbReference type="GO" id="GO:0160107">
    <property type="term" value="F:tRNA (adenine(58)-N1)-methyltransferase activity"/>
    <property type="evidence" value="ECO:0007669"/>
    <property type="project" value="UniProtKB-EC"/>
</dbReference>
<dbReference type="GO" id="GO:0006397">
    <property type="term" value="P:mRNA processing"/>
    <property type="evidence" value="ECO:0000250"/>
    <property type="project" value="UniProtKB"/>
</dbReference>
<dbReference type="GO" id="GO:0030488">
    <property type="term" value="P:tRNA methylation"/>
    <property type="evidence" value="ECO:0007669"/>
    <property type="project" value="InterPro"/>
</dbReference>
<dbReference type="FunFam" id="3.10.330.20:FF:000002">
    <property type="entry name" value="tRNA (adenine(58)-N(1))-methyltransferase catalytic subunit TRMT61A"/>
    <property type="match status" value="1"/>
</dbReference>
<dbReference type="FunFam" id="3.40.50.150:FF:000097">
    <property type="entry name" value="tRNA (adenine(58)-N(1))-methyltransferase catalytic subunit TRMT61A"/>
    <property type="match status" value="1"/>
</dbReference>
<dbReference type="Gene3D" id="3.10.330.20">
    <property type="match status" value="1"/>
</dbReference>
<dbReference type="Gene3D" id="3.40.50.150">
    <property type="entry name" value="Vaccinia Virus protein VP39"/>
    <property type="match status" value="1"/>
</dbReference>
<dbReference type="InterPro" id="IPR029063">
    <property type="entry name" value="SAM-dependent_MTases_sf"/>
</dbReference>
<dbReference type="InterPro" id="IPR049470">
    <property type="entry name" value="TRM61_C"/>
</dbReference>
<dbReference type="InterPro" id="IPR014816">
    <property type="entry name" value="tRNA_MeTrfase_Gcd14"/>
</dbReference>
<dbReference type="PANTHER" id="PTHR12133">
    <property type="entry name" value="TRNA (ADENINE(58)-N(1))-METHYLTRANSFERASE"/>
    <property type="match status" value="1"/>
</dbReference>
<dbReference type="PANTHER" id="PTHR12133:SF2">
    <property type="entry name" value="TRNA (ADENINE(58)-N(1))-METHYLTRANSFERASE CATALYTIC SUBUNIT TRMT61A"/>
    <property type="match status" value="1"/>
</dbReference>
<dbReference type="Pfam" id="PF08704">
    <property type="entry name" value="GCD14"/>
    <property type="match status" value="1"/>
</dbReference>
<dbReference type="PIRSF" id="PIRSF017269">
    <property type="entry name" value="GCD14"/>
    <property type="match status" value="1"/>
</dbReference>
<dbReference type="SUPFAM" id="SSF53335">
    <property type="entry name" value="S-adenosyl-L-methionine-dependent methyltransferases"/>
    <property type="match status" value="1"/>
</dbReference>
<dbReference type="PROSITE" id="PS51620">
    <property type="entry name" value="SAM_TRM61"/>
    <property type="match status" value="1"/>
</dbReference>
<organism>
    <name type="scientific">Mus musculus</name>
    <name type="common">Mouse</name>
    <dbReference type="NCBI Taxonomy" id="10090"/>
    <lineage>
        <taxon>Eukaryota</taxon>
        <taxon>Metazoa</taxon>
        <taxon>Chordata</taxon>
        <taxon>Craniata</taxon>
        <taxon>Vertebrata</taxon>
        <taxon>Euteleostomi</taxon>
        <taxon>Mammalia</taxon>
        <taxon>Eutheria</taxon>
        <taxon>Euarchontoglires</taxon>
        <taxon>Glires</taxon>
        <taxon>Rodentia</taxon>
        <taxon>Myomorpha</taxon>
        <taxon>Muroidea</taxon>
        <taxon>Muridae</taxon>
        <taxon>Murinae</taxon>
        <taxon>Mus</taxon>
        <taxon>Mus</taxon>
    </lineage>
</organism>
<proteinExistence type="evidence at protein level"/>
<name>TRM61_MOUSE</name>
<feature type="initiator methionine" description="Removed" evidence="2">
    <location>
        <position position="1"/>
    </location>
</feature>
<feature type="chain" id="PRO_0000233095" description="tRNA (adenine(58)-N(1))-methyltransferase catalytic subunit TRMT61A">
    <location>
        <begin position="2"/>
        <end position="290"/>
    </location>
</feature>
<feature type="region of interest" description="Substrate" evidence="2">
    <location>
        <begin position="20"/>
        <end position="22"/>
    </location>
</feature>
<feature type="region of interest" description="Substrate" evidence="2">
    <location>
        <begin position="35"/>
        <end position="42"/>
    </location>
</feature>
<feature type="region of interest" description="Substrate" evidence="2">
    <location>
        <begin position="64"/>
        <end position="65"/>
    </location>
</feature>
<feature type="region of interest" description="Substrate" evidence="2">
    <location>
        <begin position="85"/>
        <end position="89"/>
    </location>
</feature>
<feature type="region of interest" description="Substrate" evidence="2">
    <location>
        <begin position="110"/>
        <end position="117"/>
    </location>
</feature>
<feature type="region of interest" description="Substrate" evidence="2">
    <location>
        <begin position="180"/>
        <end position="183"/>
    </location>
</feature>
<feature type="region of interest" description="Substrate" evidence="2">
    <location>
        <begin position="205"/>
        <end position="212"/>
    </location>
</feature>
<feature type="binding site" evidence="2">
    <location>
        <position position="87"/>
    </location>
    <ligand>
        <name>S-adenosyl-L-methionine</name>
        <dbReference type="ChEBI" id="CHEBI:59789"/>
    </ligand>
</feature>
<feature type="binding site" evidence="2">
    <location>
        <begin position="114"/>
        <end position="116"/>
    </location>
    <ligand>
        <name>S-adenosyl-L-methionine</name>
        <dbReference type="ChEBI" id="CHEBI:59789"/>
    </ligand>
</feature>
<feature type="binding site" evidence="2 3">
    <location>
        <position position="135"/>
    </location>
    <ligand>
        <name>S-adenosyl-L-methionine</name>
        <dbReference type="ChEBI" id="CHEBI:59789"/>
    </ligand>
</feature>
<feature type="binding site" evidence="2">
    <location>
        <position position="140"/>
    </location>
    <ligand>
        <name>S-adenosyl-L-methionine</name>
        <dbReference type="ChEBI" id="CHEBI:59789"/>
    </ligand>
</feature>
<feature type="binding site" evidence="2">
    <location>
        <begin position="163"/>
        <end position="164"/>
    </location>
    <ligand>
        <name>S-adenosyl-L-methionine</name>
        <dbReference type="ChEBI" id="CHEBI:59789"/>
    </ligand>
</feature>
<feature type="binding site" evidence="2 3">
    <location>
        <position position="181"/>
    </location>
    <ligand>
        <name>S-adenosyl-L-methionine</name>
        <dbReference type="ChEBI" id="CHEBI:59789"/>
    </ligand>
</feature>
<feature type="binding site" evidence="2">
    <location>
        <position position="279"/>
    </location>
    <ligand>
        <name>substrate</name>
    </ligand>
</feature>
<feature type="modified residue" description="N-acetylserine" evidence="2">
    <location>
        <position position="2"/>
    </location>
</feature>
<feature type="modified residue" description="Phosphoserine" evidence="2">
    <location>
        <position position="264"/>
    </location>
</feature>
<feature type="sequence conflict" description="In Ref. 1; BAC33565." evidence="4" ref="1">
    <original>H</original>
    <variation>R</variation>
    <location>
        <position position="70"/>
    </location>
</feature>
<feature type="sequence conflict" description="In Ref. 1; BAC28042." evidence="4" ref="1">
    <original>G</original>
    <variation>D</variation>
    <location>
        <position position="224"/>
    </location>
</feature>
<sequence>MSFVAYEELIKEGDTAILSLGHGSMVAVRVQRGAQTQTRHGVLRHSVDLIGRPFGSKVICSRGGWVYVLHPTPELWTVNLPHRTQILYSTDIALITMMLELRPGSVVCESGTGSGSVSHAIIRSVAPTGHLHTVEFHQQRADKAREEFQEHRLSQWVTVHTQDVCCSGFGVVHVADAVFLDIPSPWEAVGHAWDALKVEGGRFCSFSPCIEQVQRTCQALAAHGFTELSTLEVLPQVYNVRTVSLPLPDLGANNLETNMGSDASPFRSGTPMKETVGHTGYLTFATKTPG</sequence>
<reference key="1">
    <citation type="journal article" date="2005" name="Science">
        <title>The transcriptional landscape of the mammalian genome.</title>
        <authorList>
            <person name="Carninci P."/>
            <person name="Kasukawa T."/>
            <person name="Katayama S."/>
            <person name="Gough J."/>
            <person name="Frith M.C."/>
            <person name="Maeda N."/>
            <person name="Oyama R."/>
            <person name="Ravasi T."/>
            <person name="Lenhard B."/>
            <person name="Wells C."/>
            <person name="Kodzius R."/>
            <person name="Shimokawa K."/>
            <person name="Bajic V.B."/>
            <person name="Brenner S.E."/>
            <person name="Batalov S."/>
            <person name="Forrest A.R."/>
            <person name="Zavolan M."/>
            <person name="Davis M.J."/>
            <person name="Wilming L.G."/>
            <person name="Aidinis V."/>
            <person name="Allen J.E."/>
            <person name="Ambesi-Impiombato A."/>
            <person name="Apweiler R."/>
            <person name="Aturaliya R.N."/>
            <person name="Bailey T.L."/>
            <person name="Bansal M."/>
            <person name="Baxter L."/>
            <person name="Beisel K.W."/>
            <person name="Bersano T."/>
            <person name="Bono H."/>
            <person name="Chalk A.M."/>
            <person name="Chiu K.P."/>
            <person name="Choudhary V."/>
            <person name="Christoffels A."/>
            <person name="Clutterbuck D.R."/>
            <person name="Crowe M.L."/>
            <person name="Dalla E."/>
            <person name="Dalrymple B.P."/>
            <person name="de Bono B."/>
            <person name="Della Gatta G."/>
            <person name="di Bernardo D."/>
            <person name="Down T."/>
            <person name="Engstrom P."/>
            <person name="Fagiolini M."/>
            <person name="Faulkner G."/>
            <person name="Fletcher C.F."/>
            <person name="Fukushima T."/>
            <person name="Furuno M."/>
            <person name="Futaki S."/>
            <person name="Gariboldi M."/>
            <person name="Georgii-Hemming P."/>
            <person name="Gingeras T.R."/>
            <person name="Gojobori T."/>
            <person name="Green R.E."/>
            <person name="Gustincich S."/>
            <person name="Harbers M."/>
            <person name="Hayashi Y."/>
            <person name="Hensch T.K."/>
            <person name="Hirokawa N."/>
            <person name="Hill D."/>
            <person name="Huminiecki L."/>
            <person name="Iacono M."/>
            <person name="Ikeo K."/>
            <person name="Iwama A."/>
            <person name="Ishikawa T."/>
            <person name="Jakt M."/>
            <person name="Kanapin A."/>
            <person name="Katoh M."/>
            <person name="Kawasawa Y."/>
            <person name="Kelso J."/>
            <person name="Kitamura H."/>
            <person name="Kitano H."/>
            <person name="Kollias G."/>
            <person name="Krishnan S.P."/>
            <person name="Kruger A."/>
            <person name="Kummerfeld S.K."/>
            <person name="Kurochkin I.V."/>
            <person name="Lareau L.F."/>
            <person name="Lazarevic D."/>
            <person name="Lipovich L."/>
            <person name="Liu J."/>
            <person name="Liuni S."/>
            <person name="McWilliam S."/>
            <person name="Madan Babu M."/>
            <person name="Madera M."/>
            <person name="Marchionni L."/>
            <person name="Matsuda H."/>
            <person name="Matsuzawa S."/>
            <person name="Miki H."/>
            <person name="Mignone F."/>
            <person name="Miyake S."/>
            <person name="Morris K."/>
            <person name="Mottagui-Tabar S."/>
            <person name="Mulder N."/>
            <person name="Nakano N."/>
            <person name="Nakauchi H."/>
            <person name="Ng P."/>
            <person name="Nilsson R."/>
            <person name="Nishiguchi S."/>
            <person name="Nishikawa S."/>
            <person name="Nori F."/>
            <person name="Ohara O."/>
            <person name="Okazaki Y."/>
            <person name="Orlando V."/>
            <person name="Pang K.C."/>
            <person name="Pavan W.J."/>
            <person name="Pavesi G."/>
            <person name="Pesole G."/>
            <person name="Petrovsky N."/>
            <person name="Piazza S."/>
            <person name="Reed J."/>
            <person name="Reid J.F."/>
            <person name="Ring B.Z."/>
            <person name="Ringwald M."/>
            <person name="Rost B."/>
            <person name="Ruan Y."/>
            <person name="Salzberg S.L."/>
            <person name="Sandelin A."/>
            <person name="Schneider C."/>
            <person name="Schoenbach C."/>
            <person name="Sekiguchi K."/>
            <person name="Semple C.A."/>
            <person name="Seno S."/>
            <person name="Sessa L."/>
            <person name="Sheng Y."/>
            <person name="Shibata Y."/>
            <person name="Shimada H."/>
            <person name="Shimada K."/>
            <person name="Silva D."/>
            <person name="Sinclair B."/>
            <person name="Sperling S."/>
            <person name="Stupka E."/>
            <person name="Sugiura K."/>
            <person name="Sultana R."/>
            <person name="Takenaka Y."/>
            <person name="Taki K."/>
            <person name="Tammoja K."/>
            <person name="Tan S.L."/>
            <person name="Tang S."/>
            <person name="Taylor M.S."/>
            <person name="Tegner J."/>
            <person name="Teichmann S.A."/>
            <person name="Ueda H.R."/>
            <person name="van Nimwegen E."/>
            <person name="Verardo R."/>
            <person name="Wei C.L."/>
            <person name="Yagi K."/>
            <person name="Yamanishi H."/>
            <person name="Zabarovsky E."/>
            <person name="Zhu S."/>
            <person name="Zimmer A."/>
            <person name="Hide W."/>
            <person name="Bult C."/>
            <person name="Grimmond S.M."/>
            <person name="Teasdale R.D."/>
            <person name="Liu E.T."/>
            <person name="Brusic V."/>
            <person name="Quackenbush J."/>
            <person name="Wahlestedt C."/>
            <person name="Mattick J.S."/>
            <person name="Hume D.A."/>
            <person name="Kai C."/>
            <person name="Sasaki D."/>
            <person name="Tomaru Y."/>
            <person name="Fukuda S."/>
            <person name="Kanamori-Katayama M."/>
            <person name="Suzuki M."/>
            <person name="Aoki J."/>
            <person name="Arakawa T."/>
            <person name="Iida J."/>
            <person name="Imamura K."/>
            <person name="Itoh M."/>
            <person name="Kato T."/>
            <person name="Kawaji H."/>
            <person name="Kawagashira N."/>
            <person name="Kawashima T."/>
            <person name="Kojima M."/>
            <person name="Kondo S."/>
            <person name="Konno H."/>
            <person name="Nakano K."/>
            <person name="Ninomiya N."/>
            <person name="Nishio T."/>
            <person name="Okada M."/>
            <person name="Plessy C."/>
            <person name="Shibata K."/>
            <person name="Shiraki T."/>
            <person name="Suzuki S."/>
            <person name="Tagami M."/>
            <person name="Waki K."/>
            <person name="Watahiki A."/>
            <person name="Okamura-Oho Y."/>
            <person name="Suzuki H."/>
            <person name="Kawai J."/>
            <person name="Hayashizaki Y."/>
        </authorList>
    </citation>
    <scope>NUCLEOTIDE SEQUENCE [LARGE SCALE MRNA]</scope>
    <source>
        <strain>C57BL/6J</strain>
        <tissue>Embryonic stem cell</tissue>
        <tissue>Wolffian duct</tissue>
    </source>
</reference>
<reference key="2">
    <citation type="journal article" date="2004" name="Genome Res.">
        <title>The status, quality, and expansion of the NIH full-length cDNA project: the Mammalian Gene Collection (MGC).</title>
        <authorList>
            <consortium name="The MGC Project Team"/>
        </authorList>
    </citation>
    <scope>NUCLEOTIDE SEQUENCE [LARGE SCALE MRNA]</scope>
    <source>
        <strain>C57BL/6J</strain>
        <tissue>Retina</tissue>
    </source>
</reference>
<reference key="3">
    <citation type="journal article" date="2010" name="Cell">
        <title>A tissue-specific atlas of mouse protein phosphorylation and expression.</title>
        <authorList>
            <person name="Huttlin E.L."/>
            <person name="Jedrychowski M.P."/>
            <person name="Elias J.E."/>
            <person name="Goswami T."/>
            <person name="Rad R."/>
            <person name="Beausoleil S.A."/>
            <person name="Villen J."/>
            <person name="Haas W."/>
            <person name="Sowa M.E."/>
            <person name="Gygi S.P."/>
        </authorList>
    </citation>
    <scope>IDENTIFICATION BY MASS SPECTROMETRY [LARGE SCALE ANALYSIS]</scope>
    <source>
        <tissue>Brain</tissue>
        <tissue>Pancreas</tissue>
        <tissue>Spleen</tissue>
    </source>
</reference>
<comment type="function">
    <text evidence="2">Catalytic subunit of tRNA (adenine-N(1)-)-methyltransferase, which catalyzes the formation of N(1)-methyladenine at position 58 (m1A58) in initiator methionyl-tRNA. Catalytic subunit of mRNA N(1)-methyltransferase complex, which mediates methylation of adenosine residues at the N(1) position of a small subset of mRNAs: N(1) methylation takes place in tRNA T-loop-like structures of mRNAs and is only present at low stoichiometries.</text>
</comment>
<comment type="catalytic activity">
    <reaction evidence="3">
        <text>adenosine(58) in tRNA + S-adenosyl-L-methionine = N(1)-methyladenosine(58) in tRNA + S-adenosyl-L-homocysteine + H(+)</text>
        <dbReference type="Rhea" id="RHEA:43152"/>
        <dbReference type="Rhea" id="RHEA-COMP:10365"/>
        <dbReference type="Rhea" id="RHEA-COMP:10366"/>
        <dbReference type="ChEBI" id="CHEBI:15378"/>
        <dbReference type="ChEBI" id="CHEBI:57856"/>
        <dbReference type="ChEBI" id="CHEBI:59789"/>
        <dbReference type="ChEBI" id="CHEBI:74411"/>
        <dbReference type="ChEBI" id="CHEBI:74491"/>
        <dbReference type="EC" id="2.1.1.220"/>
    </reaction>
</comment>
<comment type="catalytic activity">
    <reaction evidence="2">
        <text>an adenosine in mRNA + S-adenosyl-L-methionine = an N(1)-methyladenosine in mRNA + S-adenosyl-L-homocysteine + H(+)</text>
        <dbReference type="Rhea" id="RHEA:55392"/>
        <dbReference type="Rhea" id="RHEA-COMP:12414"/>
        <dbReference type="Rhea" id="RHEA-COMP:12415"/>
        <dbReference type="ChEBI" id="CHEBI:15378"/>
        <dbReference type="ChEBI" id="CHEBI:57856"/>
        <dbReference type="ChEBI" id="CHEBI:59789"/>
        <dbReference type="ChEBI" id="CHEBI:74411"/>
        <dbReference type="ChEBI" id="CHEBI:74491"/>
    </reaction>
</comment>
<comment type="subunit">
    <text evidence="2">Heterotetramer; composed of two copies of TRMT6 and two copies of TRMT61A.</text>
</comment>
<comment type="subcellular location">
    <subcellularLocation>
        <location evidence="1">Nucleus</location>
    </subcellularLocation>
</comment>
<comment type="similarity">
    <text evidence="3">Belongs to the class I-like SAM-binding methyltransferase superfamily. TRM61 family.</text>
</comment>
<gene>
    <name type="primary">Trmt61a</name>
    <name type="synonym">Trm61</name>
</gene>